<gene>
    <name type="primary">PFK2</name>
</gene>
<feature type="initiator methionine" description="Removed" evidence="3">
    <location>
        <position position="1"/>
    </location>
</feature>
<feature type="chain" id="PRO_0000429716" description="ATP-dependent 6-phosphofructokinase subunit beta">
    <location>
        <begin position="2"/>
        <end position="941"/>
    </location>
</feature>
<feature type="region of interest" description="N-terminal catalytic PFK domain 1" evidence="1 7">
    <location>
        <begin position="2"/>
        <end position="558"/>
    </location>
</feature>
<feature type="region of interest" description="Interdomain linker" evidence="1 7">
    <location>
        <begin position="559"/>
        <end position="572"/>
    </location>
</feature>
<feature type="region of interest" description="C-terminal regulatory PFK domain 2" evidence="1 7">
    <location>
        <begin position="573"/>
        <end position="941"/>
    </location>
</feature>
<feature type="active site" description="Proton acceptor" evidence="1">
    <location>
        <position position="333"/>
    </location>
</feature>
<feature type="binding site" evidence="1">
    <location>
        <position position="191"/>
    </location>
    <ligand>
        <name>ATP</name>
        <dbReference type="ChEBI" id="CHEBI:30616"/>
        <label>1</label>
        <note>substrate</note>
    </ligand>
</feature>
<feature type="binding site" evidence="1">
    <location>
        <begin position="255"/>
        <end position="256"/>
    </location>
    <ligand>
        <name>ATP</name>
        <dbReference type="ChEBI" id="CHEBI:30616"/>
        <label>1</label>
        <note>substrate</note>
    </ligand>
</feature>
<feature type="binding site" evidence="1">
    <location>
        <begin position="285"/>
        <end position="288"/>
    </location>
    <ligand>
        <name>ATP</name>
        <dbReference type="ChEBI" id="CHEBI:30616"/>
        <label>1</label>
        <note>substrate</note>
    </ligand>
</feature>
<feature type="binding site" evidence="1">
    <location>
        <position position="286"/>
    </location>
    <ligand>
        <name>Mg(2+)</name>
        <dbReference type="ChEBI" id="CHEBI:18420"/>
        <note>catalytic</note>
    </ligand>
</feature>
<feature type="binding site" evidence="1">
    <location>
        <begin position="331"/>
        <end position="333"/>
    </location>
    <ligand>
        <name>beta-D-fructose 6-phosphate</name>
        <dbReference type="ChEBI" id="CHEBI:57634"/>
        <label>2</label>
        <note>ligand shared with subunit alpha</note>
    </ligand>
</feature>
<feature type="binding site" evidence="1">
    <location>
        <position position="368"/>
    </location>
    <ligand>
        <name>beta-D-fructose 6-phosphate</name>
        <dbReference type="ChEBI" id="CHEBI:57634"/>
        <label>1</label>
        <note>ligand shared with subunit alpha</note>
    </ligand>
</feature>
<feature type="binding site" evidence="1">
    <location>
        <begin position="375"/>
        <end position="377"/>
    </location>
    <ligand>
        <name>beta-D-fructose 6-phosphate</name>
        <dbReference type="ChEBI" id="CHEBI:57634"/>
        <label>2</label>
        <note>ligand shared with subunit alpha</note>
    </ligand>
</feature>
<feature type="binding site" evidence="6 8">
    <location>
        <position position="395"/>
    </location>
    <ligand>
        <name>ATP</name>
        <dbReference type="ChEBI" id="CHEBI:30616"/>
        <label>2</label>
        <note>allosteric inhibitor</note>
    </ligand>
</feature>
<feature type="binding site" evidence="6 8">
    <location>
        <begin position="400"/>
        <end position="405"/>
    </location>
    <ligand>
        <name>ATP</name>
        <dbReference type="ChEBI" id="CHEBI:30616"/>
        <label>2</label>
        <note>allosteric inhibitor</note>
    </ligand>
</feature>
<feature type="binding site" evidence="6 8">
    <location>
        <position position="410"/>
    </location>
    <ligand>
        <name>ATP</name>
        <dbReference type="ChEBI" id="CHEBI:30616"/>
        <label>2</label>
        <note>allosteric inhibitor</note>
    </ligand>
</feature>
<feature type="binding site" evidence="1">
    <location>
        <position position="432"/>
    </location>
    <ligand>
        <name>beta-D-fructose 6-phosphate</name>
        <dbReference type="ChEBI" id="CHEBI:57634"/>
        <label>2</label>
        <note>ligand shared with subunit alpha</note>
    </ligand>
</feature>
<feature type="binding site" evidence="1">
    <location>
        <position position="460"/>
    </location>
    <ligand>
        <name>beta-D-fructose 6-phosphate</name>
        <dbReference type="ChEBI" id="CHEBI:57634"/>
        <label>1</label>
        <note>ligand shared with subunit alpha</note>
    </ligand>
</feature>
<feature type="binding site" evidence="1">
    <location>
        <begin position="466"/>
        <end position="469"/>
    </location>
    <ligand>
        <name>beta-D-fructose 6-phosphate</name>
        <dbReference type="ChEBI" id="CHEBI:57634"/>
        <label>2</label>
        <note>ligand shared with subunit alpha</note>
    </ligand>
</feature>
<feature type="binding site" evidence="6 8">
    <location>
        <begin position="557"/>
        <end position="558"/>
    </location>
    <ligand>
        <name>ATP</name>
        <dbReference type="ChEBI" id="CHEBI:30616"/>
        <label>2</label>
        <note>allosteric inhibitor</note>
    </ligand>
</feature>
<feature type="binding site" evidence="1">
    <location>
        <position position="643"/>
    </location>
    <ligand>
        <name>beta-D-fructose 2,6-bisphosphate</name>
        <dbReference type="ChEBI" id="CHEBI:58579"/>
        <label>2</label>
        <note>allosteric activator; ligand shared with subunit alpha</note>
    </ligand>
</feature>
<feature type="binding site" evidence="1">
    <location>
        <begin position="701"/>
        <end position="705"/>
    </location>
    <ligand>
        <name>beta-D-fructose 2,6-bisphosphate</name>
        <dbReference type="ChEBI" id="CHEBI:58579"/>
        <label>2</label>
        <note>allosteric activator; ligand shared with subunit alpha</note>
    </ligand>
</feature>
<feature type="binding site" evidence="1">
    <location>
        <position position="739"/>
    </location>
    <ligand>
        <name>beta-D-fructose 2,6-bisphosphate</name>
        <dbReference type="ChEBI" id="CHEBI:58579"/>
        <label>1</label>
        <note>allosteric activator; ligand shared with subunit alpha</note>
    </ligand>
</feature>
<feature type="binding site" evidence="1">
    <location>
        <begin position="746"/>
        <end position="748"/>
    </location>
    <ligand>
        <name>beta-D-fructose 2,6-bisphosphate</name>
        <dbReference type="ChEBI" id="CHEBI:58579"/>
        <label>2</label>
        <note>allosteric activator; ligand shared with subunit alpha</note>
    </ligand>
</feature>
<feature type="binding site" evidence="1">
    <location>
        <position position="806"/>
    </location>
    <ligand>
        <name>beta-D-fructose 2,6-bisphosphate</name>
        <dbReference type="ChEBI" id="CHEBI:58579"/>
        <label>2</label>
        <note>allosteric activator; ligand shared with subunit alpha</note>
    </ligand>
</feature>
<feature type="binding site" evidence="1">
    <location>
        <position position="832"/>
    </location>
    <ligand>
        <name>beta-D-fructose 2,6-bisphosphate</name>
        <dbReference type="ChEBI" id="CHEBI:58579"/>
        <label>1</label>
        <note>allosteric activator; ligand shared with subunit alpha</note>
    </ligand>
</feature>
<feature type="binding site" evidence="1">
    <location>
        <begin position="838"/>
        <end position="841"/>
    </location>
    <ligand>
        <name>beta-D-fructose 2,6-bisphosphate</name>
        <dbReference type="ChEBI" id="CHEBI:58579"/>
        <label>2</label>
        <note>allosteric activator; ligand shared with subunit alpha</note>
    </ligand>
</feature>
<feature type="binding site" evidence="1">
    <location>
        <position position="918"/>
    </location>
    <ligand>
        <name>beta-D-fructose 2,6-bisphosphate</name>
        <dbReference type="ChEBI" id="CHEBI:58579"/>
        <label>2</label>
        <note>allosteric activator; ligand shared with subunit alpha</note>
    </ligand>
</feature>
<feature type="strand" evidence="9">
    <location>
        <begin position="9"/>
        <end position="16"/>
    </location>
</feature>
<feature type="helix" evidence="9">
    <location>
        <begin position="24"/>
        <end position="32"/>
    </location>
</feature>
<feature type="strand" evidence="9">
    <location>
        <begin position="59"/>
        <end position="63"/>
    </location>
</feature>
<feature type="helix" evidence="9">
    <location>
        <begin position="70"/>
        <end position="80"/>
    </location>
</feature>
<feature type="strand" evidence="9">
    <location>
        <begin position="97"/>
        <end position="103"/>
    </location>
</feature>
<feature type="helix" evidence="9">
    <location>
        <begin position="105"/>
        <end position="113"/>
    </location>
</feature>
<feature type="turn" evidence="9">
    <location>
        <begin position="114"/>
        <end position="116"/>
    </location>
</feature>
<feature type="strand" evidence="9">
    <location>
        <begin position="122"/>
        <end position="125"/>
    </location>
</feature>
<feature type="strand" evidence="9">
    <location>
        <begin position="129"/>
        <end position="131"/>
    </location>
</feature>
<feature type="strand" evidence="9">
    <location>
        <begin position="138"/>
        <end position="141"/>
    </location>
</feature>
<feature type="strand" evidence="9">
    <location>
        <begin position="147"/>
        <end position="149"/>
    </location>
</feature>
<feature type="strand" evidence="9">
    <location>
        <begin position="184"/>
        <end position="188"/>
    </location>
</feature>
<feature type="helix" evidence="9">
    <location>
        <begin position="196"/>
        <end position="209"/>
    </location>
</feature>
<feature type="strand" evidence="9">
    <location>
        <begin position="214"/>
        <end position="217"/>
    </location>
</feature>
<feature type="helix" evidence="9">
    <location>
        <begin position="220"/>
        <end position="226"/>
    </location>
</feature>
<feature type="turn" evidence="9">
    <location>
        <begin position="229"/>
        <end position="231"/>
    </location>
</feature>
<feature type="strand" evidence="9">
    <location>
        <begin position="232"/>
        <end position="235"/>
    </location>
</feature>
<feature type="helix" evidence="9">
    <location>
        <begin position="237"/>
        <end position="240"/>
    </location>
</feature>
<feature type="turn" evidence="9">
    <location>
        <begin position="241"/>
        <end position="245"/>
    </location>
</feature>
<feature type="helix" evidence="9">
    <location>
        <begin position="258"/>
        <end position="260"/>
    </location>
</feature>
<feature type="helix" evidence="9">
    <location>
        <begin position="262"/>
        <end position="275"/>
    </location>
</feature>
<feature type="strand" evidence="9">
    <location>
        <begin position="279"/>
        <end position="284"/>
    </location>
</feature>
<feature type="helix" evidence="9">
    <location>
        <begin position="286"/>
        <end position="297"/>
    </location>
</feature>
<feature type="helix" evidence="9">
    <location>
        <begin position="315"/>
        <end position="319"/>
    </location>
</feature>
<feature type="strand" evidence="9">
    <location>
        <begin position="324"/>
        <end position="333"/>
    </location>
</feature>
<feature type="helix" evidence="9">
    <location>
        <begin position="345"/>
        <end position="360"/>
    </location>
</feature>
<feature type="strand" evidence="9">
    <location>
        <begin position="367"/>
        <end position="373"/>
    </location>
</feature>
<feature type="helix" evidence="9">
    <location>
        <begin position="381"/>
        <end position="389"/>
    </location>
</feature>
<feature type="strand" evidence="9">
    <location>
        <begin position="393"/>
        <end position="396"/>
    </location>
</feature>
<feature type="helix" evidence="9">
    <location>
        <begin position="407"/>
        <end position="421"/>
    </location>
</feature>
<feature type="strand" evidence="9">
    <location>
        <begin position="426"/>
        <end position="430"/>
    </location>
</feature>
<feature type="helix" evidence="9">
    <location>
        <begin position="444"/>
        <end position="453"/>
    </location>
</feature>
<feature type="strand" evidence="9">
    <location>
        <begin position="458"/>
        <end position="463"/>
    </location>
</feature>
<feature type="helix" evidence="9">
    <location>
        <begin position="465"/>
        <end position="468"/>
    </location>
</feature>
<feature type="helix" evidence="9">
    <location>
        <begin position="475"/>
        <end position="494"/>
    </location>
</feature>
<feature type="strand" evidence="9">
    <location>
        <begin position="502"/>
        <end position="509"/>
    </location>
</feature>
<feature type="strand" evidence="9">
    <location>
        <begin position="511"/>
        <end position="515"/>
    </location>
</feature>
<feature type="helix" evidence="9">
    <location>
        <begin position="516"/>
        <end position="531"/>
    </location>
</feature>
<feature type="helix" evidence="9">
    <location>
        <begin position="535"/>
        <end position="541"/>
    </location>
</feature>
<feature type="helix" evidence="9">
    <location>
        <begin position="544"/>
        <end position="557"/>
    </location>
</feature>
<feature type="helix" evidence="9">
    <location>
        <begin position="568"/>
        <end position="570"/>
    </location>
</feature>
<feature type="strand" evidence="9">
    <location>
        <begin position="573"/>
        <end position="581"/>
    </location>
</feature>
<feature type="helix" evidence="9">
    <location>
        <begin position="586"/>
        <end position="600"/>
    </location>
</feature>
<feature type="strand" evidence="9">
    <location>
        <begin position="603"/>
        <end position="607"/>
    </location>
</feature>
<feature type="helix" evidence="9">
    <location>
        <begin position="610"/>
        <end position="617"/>
    </location>
</feature>
<feature type="strand" evidence="9">
    <location>
        <begin position="620"/>
        <end position="622"/>
    </location>
</feature>
<feature type="turn" evidence="9">
    <location>
        <begin position="625"/>
        <end position="630"/>
    </location>
</feature>
<feature type="helix" evidence="9">
    <location>
        <begin position="631"/>
        <end position="633"/>
    </location>
</feature>
<feature type="turn" evidence="9">
    <location>
        <begin position="646"/>
        <end position="648"/>
    </location>
</feature>
<feature type="helix" evidence="9">
    <location>
        <begin position="651"/>
        <end position="660"/>
    </location>
</feature>
<feature type="strand" evidence="9">
    <location>
        <begin position="664"/>
        <end position="671"/>
    </location>
</feature>
<feature type="helix" evidence="9">
    <location>
        <begin position="672"/>
        <end position="683"/>
    </location>
</feature>
<feature type="helix" evidence="9">
    <location>
        <begin position="684"/>
        <end position="686"/>
    </location>
</feature>
<feature type="helix" evidence="9">
    <location>
        <begin position="689"/>
        <end position="691"/>
    </location>
</feature>
<feature type="strand" evidence="9">
    <location>
        <begin position="695"/>
        <end position="700"/>
    </location>
</feature>
<feature type="helix" evidence="9">
    <location>
        <begin position="715"/>
        <end position="735"/>
    </location>
</feature>
<feature type="strand" evidence="9">
    <location>
        <begin position="739"/>
        <end position="745"/>
    </location>
</feature>
<feature type="helix" evidence="9">
    <location>
        <begin position="752"/>
        <end position="761"/>
    </location>
</feature>
<feature type="strand" evidence="9">
    <location>
        <begin position="764"/>
        <end position="767"/>
    </location>
</feature>
<feature type="turn" evidence="9">
    <location>
        <begin position="769"/>
        <end position="771"/>
    </location>
</feature>
<feature type="helix" evidence="9">
    <location>
        <begin position="775"/>
        <end position="790"/>
    </location>
</feature>
<feature type="strand" evidence="9">
    <location>
        <begin position="800"/>
        <end position="805"/>
    </location>
</feature>
<feature type="helix" evidence="9">
    <location>
        <begin position="806"/>
        <end position="808"/>
    </location>
</feature>
<feature type="strand" evidence="9">
    <location>
        <begin position="810"/>
        <end position="812"/>
    </location>
</feature>
<feature type="helix" evidence="9">
    <location>
        <begin position="814"/>
        <end position="825"/>
    </location>
</feature>
<feature type="strand" evidence="9">
    <location>
        <begin position="828"/>
        <end position="834"/>
    </location>
</feature>
<feature type="turn" evidence="9">
    <location>
        <begin position="838"/>
        <end position="841"/>
    </location>
</feature>
<feature type="helix" evidence="9">
    <location>
        <begin position="847"/>
        <end position="875"/>
    </location>
</feature>
<feature type="helix" evidence="9">
    <location>
        <begin position="884"/>
        <end position="887"/>
    </location>
</feature>
<feature type="strand" evidence="9">
    <location>
        <begin position="890"/>
        <end position="895"/>
    </location>
</feature>
<feature type="strand" evidence="9">
    <location>
        <begin position="900"/>
        <end position="904"/>
    </location>
</feature>
<feature type="helix" evidence="9">
    <location>
        <begin position="905"/>
        <end position="910"/>
    </location>
</feature>
<feature type="turn" evidence="9">
    <location>
        <begin position="915"/>
        <end position="918"/>
    </location>
</feature>
<feature type="helix" evidence="9">
    <location>
        <begin position="926"/>
        <end position="936"/>
    </location>
</feature>
<evidence type="ECO:0000255" key="1">
    <source>
        <dbReference type="HAMAP-Rule" id="MF_03184"/>
    </source>
</evidence>
<evidence type="ECO:0000269" key="2">
    <source>
    </source>
</evidence>
<evidence type="ECO:0000269" key="3">
    <source>
    </source>
</evidence>
<evidence type="ECO:0000269" key="4">
    <source>
    </source>
</evidence>
<evidence type="ECO:0000269" key="5">
    <source>
    </source>
</evidence>
<evidence type="ECO:0000269" key="6">
    <source>
    </source>
</evidence>
<evidence type="ECO:0000305" key="7">
    <source>
    </source>
</evidence>
<evidence type="ECO:0007744" key="8">
    <source>
        <dbReference type="PDB" id="3OPY"/>
    </source>
</evidence>
<evidence type="ECO:0007829" key="9">
    <source>
        <dbReference type="PDB" id="3OPY"/>
    </source>
</evidence>
<organism>
    <name type="scientific">Komagataella pastoris</name>
    <name type="common">Yeast</name>
    <name type="synonym">Pichia pastoris</name>
    <dbReference type="NCBI Taxonomy" id="4922"/>
    <lineage>
        <taxon>Eukaryota</taxon>
        <taxon>Fungi</taxon>
        <taxon>Dikarya</taxon>
        <taxon>Ascomycota</taxon>
        <taxon>Saccharomycotina</taxon>
        <taxon>Pichiomycetes</taxon>
        <taxon>Pichiales</taxon>
        <taxon>Pichiaceae</taxon>
        <taxon>Komagataella</taxon>
    </lineage>
</organism>
<accession>Q8TGA0</accession>
<name>PFKA2_PICPA</name>
<comment type="function">
    <text evidence="1 2">Catalyzes the phosphorylation of D-fructose 6-phosphate to fructose 1,6-bisphosphate by ATP, the first committing step of glycolysis.</text>
</comment>
<comment type="catalytic activity">
    <reaction evidence="1 2">
        <text>beta-D-fructose 6-phosphate + ATP = beta-D-fructose 1,6-bisphosphate + ADP + H(+)</text>
        <dbReference type="Rhea" id="RHEA:16109"/>
        <dbReference type="ChEBI" id="CHEBI:15378"/>
        <dbReference type="ChEBI" id="CHEBI:30616"/>
        <dbReference type="ChEBI" id="CHEBI:32966"/>
        <dbReference type="ChEBI" id="CHEBI:57634"/>
        <dbReference type="ChEBI" id="CHEBI:456216"/>
        <dbReference type="EC" id="2.7.1.11"/>
    </reaction>
</comment>
<comment type="cofactor">
    <cofactor evidence="1">
        <name>Mg(2+)</name>
        <dbReference type="ChEBI" id="CHEBI:18420"/>
    </cofactor>
</comment>
<comment type="activity regulation">
    <text evidence="1 2">Allosterically activated by ADP, AMP, or fructose 2,6-bisphosphate, and allosterically inhibited by ATP or citrate.</text>
</comment>
<comment type="biophysicochemical properties">
    <kinetics>
        <KM evidence="2">6.971 mM for D-fructose 6-phosphate</KM>
    </kinetics>
</comment>
<comment type="pathway">
    <text evidence="1">Carbohydrate degradation; glycolysis; D-glyceraldehyde 3-phosphate and glycerone phosphate from D-glucose: step 3/4.</text>
</comment>
<comment type="subunit">
    <text evidence="2 4 5 6">Heterododecamer of 4 alpha, 4 beta and 4 gamma chains.</text>
</comment>
<comment type="subcellular location">
    <subcellularLocation>
        <location evidence="1 4">Cytoplasm</location>
    </subcellularLocation>
</comment>
<comment type="similarity">
    <text evidence="1">Belongs to the phosphofructokinase type A (PFKA) family. ATP-dependent PFK group I subfamily. Eukaryotic two domain clade 'E' sub-subfamily.</text>
</comment>
<proteinExistence type="evidence at protein level"/>
<dbReference type="EC" id="2.7.1.11" evidence="1"/>
<dbReference type="EMBL" id="AF395078">
    <property type="protein sequence ID" value="AAL82590.2"/>
    <property type="molecule type" value="Genomic_DNA"/>
</dbReference>
<dbReference type="PDB" id="3OPY">
    <property type="method" value="X-ray"/>
    <property type="resolution" value="3.05 A"/>
    <property type="chains" value="B/D/F/H=1-941"/>
</dbReference>
<dbReference type="PDBsum" id="3OPY"/>
<dbReference type="SMR" id="Q8TGA0"/>
<dbReference type="OrthoDB" id="537915at2759"/>
<dbReference type="UniPathway" id="UPA00109">
    <property type="reaction ID" value="UER00182"/>
</dbReference>
<dbReference type="EvolutionaryTrace" id="Q8TGA0"/>
<dbReference type="GO" id="GO:0005945">
    <property type="term" value="C:6-phosphofructokinase complex"/>
    <property type="evidence" value="ECO:0007669"/>
    <property type="project" value="TreeGrafter"/>
</dbReference>
<dbReference type="GO" id="GO:0005739">
    <property type="term" value="C:mitochondrion"/>
    <property type="evidence" value="ECO:0007669"/>
    <property type="project" value="TreeGrafter"/>
</dbReference>
<dbReference type="GO" id="GO:0003872">
    <property type="term" value="F:6-phosphofructokinase activity"/>
    <property type="evidence" value="ECO:0007669"/>
    <property type="project" value="UniProtKB-UniRule"/>
</dbReference>
<dbReference type="GO" id="GO:0016208">
    <property type="term" value="F:AMP binding"/>
    <property type="evidence" value="ECO:0007669"/>
    <property type="project" value="TreeGrafter"/>
</dbReference>
<dbReference type="GO" id="GO:0005524">
    <property type="term" value="F:ATP binding"/>
    <property type="evidence" value="ECO:0007669"/>
    <property type="project" value="UniProtKB-KW"/>
</dbReference>
<dbReference type="GO" id="GO:0070095">
    <property type="term" value="F:fructose-6-phosphate binding"/>
    <property type="evidence" value="ECO:0007669"/>
    <property type="project" value="TreeGrafter"/>
</dbReference>
<dbReference type="GO" id="GO:0042802">
    <property type="term" value="F:identical protein binding"/>
    <property type="evidence" value="ECO:0007669"/>
    <property type="project" value="TreeGrafter"/>
</dbReference>
<dbReference type="GO" id="GO:0046872">
    <property type="term" value="F:metal ion binding"/>
    <property type="evidence" value="ECO:0007669"/>
    <property type="project" value="UniProtKB-KW"/>
</dbReference>
<dbReference type="GO" id="GO:0048029">
    <property type="term" value="F:monosaccharide binding"/>
    <property type="evidence" value="ECO:0007669"/>
    <property type="project" value="TreeGrafter"/>
</dbReference>
<dbReference type="GO" id="GO:0061621">
    <property type="term" value="P:canonical glycolysis"/>
    <property type="evidence" value="ECO:0007669"/>
    <property type="project" value="TreeGrafter"/>
</dbReference>
<dbReference type="GO" id="GO:0030388">
    <property type="term" value="P:fructose 1,6-bisphosphate metabolic process"/>
    <property type="evidence" value="ECO:0007669"/>
    <property type="project" value="TreeGrafter"/>
</dbReference>
<dbReference type="GO" id="GO:0006002">
    <property type="term" value="P:fructose 6-phosphate metabolic process"/>
    <property type="evidence" value="ECO:0007669"/>
    <property type="project" value="InterPro"/>
</dbReference>
<dbReference type="FunFam" id="3.40.50.460:FF:000007">
    <property type="entry name" value="ATP-dependent 6-phosphofructokinase"/>
    <property type="match status" value="1"/>
</dbReference>
<dbReference type="FunFam" id="3.40.50.460:FF:000008">
    <property type="entry name" value="ATP-dependent 6-phosphofructokinase"/>
    <property type="match status" value="1"/>
</dbReference>
<dbReference type="Gene3D" id="3.40.50.450">
    <property type="match status" value="2"/>
</dbReference>
<dbReference type="Gene3D" id="3.10.180.10">
    <property type="entry name" value="2,3-Dihydroxybiphenyl 1,2-Dioxygenase, domain 1"/>
    <property type="match status" value="1"/>
</dbReference>
<dbReference type="Gene3D" id="3.40.50.460">
    <property type="entry name" value="Phosphofructokinase domain"/>
    <property type="match status" value="2"/>
</dbReference>
<dbReference type="HAMAP" id="MF_03184">
    <property type="entry name" value="Phosphofructokinase_I_E"/>
    <property type="match status" value="1"/>
</dbReference>
<dbReference type="InterPro" id="IPR009161">
    <property type="entry name" value="6-Pfructokinase_euk"/>
</dbReference>
<dbReference type="InterPro" id="IPR022953">
    <property type="entry name" value="ATP_PFK"/>
</dbReference>
<dbReference type="InterPro" id="IPR029068">
    <property type="entry name" value="Glyas_Bleomycin-R_OHBP_Dase"/>
</dbReference>
<dbReference type="InterPro" id="IPR015912">
    <property type="entry name" value="Phosphofructokinase_CS"/>
</dbReference>
<dbReference type="InterPro" id="IPR000023">
    <property type="entry name" value="Phosphofructokinase_dom"/>
</dbReference>
<dbReference type="InterPro" id="IPR035966">
    <property type="entry name" value="PKF_sf"/>
</dbReference>
<dbReference type="NCBIfam" id="TIGR02478">
    <property type="entry name" value="6PF1K_euk"/>
    <property type="match status" value="1"/>
</dbReference>
<dbReference type="PANTHER" id="PTHR13697:SF4">
    <property type="entry name" value="ATP-DEPENDENT 6-PHOSPHOFRUCTOKINASE"/>
    <property type="match status" value="1"/>
</dbReference>
<dbReference type="PANTHER" id="PTHR13697">
    <property type="entry name" value="PHOSPHOFRUCTOKINASE"/>
    <property type="match status" value="1"/>
</dbReference>
<dbReference type="Pfam" id="PF00365">
    <property type="entry name" value="PFK"/>
    <property type="match status" value="2"/>
</dbReference>
<dbReference type="PIRSF" id="PIRSF000533">
    <property type="entry name" value="ATP_PFK_euk"/>
    <property type="match status" value="1"/>
</dbReference>
<dbReference type="PRINTS" id="PR00476">
    <property type="entry name" value="PHFRCTKINASE"/>
</dbReference>
<dbReference type="SUPFAM" id="SSF54593">
    <property type="entry name" value="Glyoxalase/Bleomycin resistance protein/Dihydroxybiphenyl dioxygenase"/>
    <property type="match status" value="1"/>
</dbReference>
<dbReference type="SUPFAM" id="SSF53784">
    <property type="entry name" value="Phosphofructokinase"/>
    <property type="match status" value="2"/>
</dbReference>
<dbReference type="PROSITE" id="PS00433">
    <property type="entry name" value="PHOSPHOFRUCTOKINASE"/>
    <property type="match status" value="2"/>
</dbReference>
<keyword id="KW-0002">3D-structure</keyword>
<keyword id="KW-0021">Allosteric enzyme</keyword>
<keyword id="KW-0067">ATP-binding</keyword>
<keyword id="KW-0963">Cytoplasm</keyword>
<keyword id="KW-0903">Direct protein sequencing</keyword>
<keyword id="KW-0324">Glycolysis</keyword>
<keyword id="KW-0418">Kinase</keyword>
<keyword id="KW-0460">Magnesium</keyword>
<keyword id="KW-0479">Metal-binding</keyword>
<keyword id="KW-0547">Nucleotide-binding</keyword>
<keyword id="KW-0808">Transferase</keyword>
<sequence>MPDASLFNGTSFITLFAPNISLLQASIDFYTNFLGFAIRKNSNQKLFWLQLEEDQNNVSIQLILDPEHAASVSQIDQNIRNLTRSLYRKDWRSIQSNIAFKSSSLSKLVKLLKDGGHPVQQSPNEISPFEVYTVDPLGSLIGFSGFKNPFAVNERSLLPKVSEEKAYRAEDDSEKLLNPVRKTIGVMTSGGDSPGMNPFVRAVVRAGIYKGCKVFCIHEGYEGLVRGGEKYIKETQWHDVRGWLVEGGTNIGTARCKEFRERSGRLKACKNMIDMGIDALIVCGGDGSLTGADRFRSEWPSLIEELLQTEQISQQQFNTHQNLNICGAVGSIDNDMSSTDATIGAFSSLDRICRAIDYIDATANSHSRAFIVEVMGRHCGWLGLLAGLATSADYILIPEKPASSREWQDQMCDIVGKHRARGKRKTIVIVAEGAISNDLSPISCDQVKDVLVNRLGLDTRVTTLGHVQRGGTAVAFDRIYATLQGVEAVNAVLECDADTPSPMIAIKEDQITRVPLVDAVELTQQVAKSIESRNFKKAISLRDSEFVEHMKNFISTNSADHVPPSLPLEKRKKIAIINVGAPAGGMNSAVYSMATYCMSRGHVPYAIHNGFSGLARHESVRSINWLDIEGWGSLGGSEIGTNRTLPNDADIGMIAYFFEKYGFDGLILVGGFEAFISLHQLERARINYPSLRIPLVLIPATISNNVPGTEYSLGSDTCLNSFMEYCDVIKQSAAATRNRVFVVEVQGGNSGYIATHAQLACGAQISYVPEEGISLAQLEMDINSLKESFANDQGKTKSGRLILKSENASKVLTTEVISTIIDDEASGRFDSKTAIPGHVQQGGIPSPMDRVRASRFAIRAVSFIERHSDRCQTFKNSISFRQTDEITSTAVVLGIHKSQLRFTPIRQLYDFESDVPRRMRKNIFWSNVREISDMLSGRTSL</sequence>
<protein>
    <recommendedName>
        <fullName evidence="1">ATP-dependent 6-phosphofructokinase subunit beta</fullName>
        <ecNumber evidence="1">2.7.1.11</ecNumber>
    </recommendedName>
    <alternativeName>
        <fullName evidence="1">ATP-dependent 6-phosphofructokinase 2</fullName>
        <shortName evidence="1">ATP-PFK 2</shortName>
        <shortName evidence="1">Phosphofructokinase 2</shortName>
    </alternativeName>
    <alternativeName>
        <fullName evidence="1">Phosphohexokinase 2</fullName>
    </alternativeName>
</protein>
<reference key="1">
    <citation type="journal article" date="2002" name="Yeast">
        <title>Molecular genetics of 6-phosphofructokinase in Pichia pastoris.</title>
        <authorList>
            <person name="Edelmann A."/>
            <person name="Baer J."/>
        </authorList>
    </citation>
    <scope>NUCLEOTIDE SEQUENCE [GENOMIC DNA]</scope>
    <scope>PROTEIN SEQUENCE OF 2-16</scope>
    <source>
        <strain>MH458</strain>
    </source>
</reference>
<reference key="2">
    <citation type="journal article" date="2002" name="Yeast">
        <title>6-phosphofructokinase from Pichia pastoris: purification, kinetic and molecular characterization of the enzyme.</title>
        <authorList>
            <person name="Kirchberger J."/>
            <person name="Baer J."/>
            <person name="Schellenberger W."/>
            <person name="Dihazi H."/>
            <person name="Kopperschlaeger G."/>
        </authorList>
    </citation>
    <scope>FUNCTION</scope>
    <scope>CATALYTIC ACTIVITY</scope>
    <scope>BIOPHYSICOCHEMICAL PROPERTIES</scope>
    <scope>ACTIVITY REGULATION</scope>
    <scope>SUBUNIT</scope>
    <source>
        <strain>ATCC 28485 / BCRC 21531 / CBS 704 / DSM 70382 / JCM 3650 / NBRC 10777 / NRRLY-1603</strain>
    </source>
</reference>
<reference key="3">
    <citation type="journal article" date="2007" name="J. Biol. Chem.">
        <title>A novel form of 6-phosphofructokinase. Identification and functional relevance of a third type of subunit in Pichia pastoris.</title>
        <authorList>
            <person name="Tanneberger K."/>
            <person name="Kirchberger J."/>
            <person name="Baer J."/>
            <person name="Schellenberger W."/>
            <person name="Rothemund S."/>
            <person name="Kamprad M."/>
            <person name="Otto H."/>
            <person name="Schoeneberg T."/>
            <person name="Edelmann A."/>
        </authorList>
    </citation>
    <scope>SUBUNIT</scope>
    <scope>SUBCELLULAR LOCATION</scope>
</reference>
<reference key="4">
    <citation type="journal article" date="2009" name="J. Struct. Biol.">
        <title>3D structure of phosphofructokinase from Pichia pastoris: Localization of the novel gamma-subunits.</title>
        <authorList>
            <person name="Benjamin S."/>
            <person name="Radermacher M."/>
            <person name="Kirchberger J."/>
            <person name="Schoeneberg T."/>
            <person name="Edelmann A."/>
            <person name="Ruiz T."/>
        </authorList>
    </citation>
    <scope>STRUCTURE BY ELECTRON MICROSCOPY</scope>
    <scope>SUBUNIT</scope>
</reference>
<reference evidence="8" key="5">
    <citation type="journal article" date="2011" name="FASEB J.">
        <title>Molecular architecture and structural basis of allosteric regulation of eukaryotic phosphofructokinases.</title>
        <authorList>
            <person name="Straeter N."/>
            <person name="Marek S."/>
            <person name="Kuettner E.B."/>
            <person name="Kloos M."/>
            <person name="Keim A."/>
            <person name="Brueser A."/>
            <person name="Kirchberger J."/>
            <person name="Schoeneberg T."/>
        </authorList>
    </citation>
    <scope>X-RAY CRYSTALLOGRAPHY (3.05 ANGSTROMS) IN COMPLEX WITH ALLOSTERIC INHIBITOR ATP</scope>
</reference>